<sequence>MKFEKYIDHTLLKPESTRTQIDQIIDEAKAYNFKSVCVNPTHVKYAAERLADSEVLVCTVIGFPLGASTTATKAFETEDAIQNGADEIDMVINIGALKDGRFDDVQQDIEAVVKAAKGHTVKVIIETVLLDHDEIVKASELTKAAGADFVKTSTGFAGGGATAEDVKLMKDTVGADVEVKASGGVRNLEDFNKMVEAGATRIGASAGVQIMQGLEADSDY</sequence>
<gene>
    <name evidence="1" type="primary">deoC1</name>
    <name type="synonym">dra</name>
    <name type="ordered locus">SAV0138</name>
</gene>
<proteinExistence type="inferred from homology"/>
<evidence type="ECO:0000255" key="1">
    <source>
        <dbReference type="HAMAP-Rule" id="MF_00114"/>
    </source>
</evidence>
<evidence type="ECO:0000305" key="2"/>
<feature type="chain" id="PRO_0000057257" description="Deoxyribose-phosphate aldolase 1">
    <location>
        <begin position="1"/>
        <end position="220"/>
    </location>
</feature>
<feature type="active site" description="Proton donor/acceptor" evidence="1">
    <location>
        <position position="89"/>
    </location>
</feature>
<feature type="active site" description="Schiff-base intermediate with acetaldehyde" evidence="1">
    <location>
        <position position="151"/>
    </location>
</feature>
<feature type="active site" description="Proton donor/acceptor" evidence="1">
    <location>
        <position position="180"/>
    </location>
</feature>
<name>DEOC1_STAAM</name>
<organism>
    <name type="scientific">Staphylococcus aureus (strain Mu50 / ATCC 700699)</name>
    <dbReference type="NCBI Taxonomy" id="158878"/>
    <lineage>
        <taxon>Bacteria</taxon>
        <taxon>Bacillati</taxon>
        <taxon>Bacillota</taxon>
        <taxon>Bacilli</taxon>
        <taxon>Bacillales</taxon>
        <taxon>Staphylococcaceae</taxon>
        <taxon>Staphylococcus</taxon>
    </lineage>
</organism>
<keyword id="KW-0963">Cytoplasm</keyword>
<keyword id="KW-0456">Lyase</keyword>
<keyword id="KW-0704">Schiff base</keyword>
<protein>
    <recommendedName>
        <fullName evidence="1">Deoxyribose-phosphate aldolase 1</fullName>
        <shortName evidence="1">DERA 1</shortName>
        <ecNumber evidence="1">4.1.2.4</ecNumber>
    </recommendedName>
    <alternativeName>
        <fullName evidence="1">2-deoxy-D-ribose 5-phosphate aldolase 1</fullName>
    </alternativeName>
    <alternativeName>
        <fullName evidence="1">Phosphodeoxyriboaldolase 1</fullName>
        <shortName evidence="1">Deoxyriboaldolase 1</shortName>
    </alternativeName>
</protein>
<dbReference type="EC" id="4.1.2.4" evidence="1"/>
<dbReference type="EMBL" id="BA000017">
    <property type="protein sequence ID" value="BAB56300.1"/>
    <property type="molecule type" value="Genomic_DNA"/>
</dbReference>
<dbReference type="SMR" id="P61108"/>
<dbReference type="KEGG" id="sav:SAV0138"/>
<dbReference type="HOGENOM" id="CLU_053595_0_1_9"/>
<dbReference type="PhylomeDB" id="P61108"/>
<dbReference type="UniPathway" id="UPA00002">
    <property type="reaction ID" value="UER00468"/>
</dbReference>
<dbReference type="Proteomes" id="UP000002481">
    <property type="component" value="Chromosome"/>
</dbReference>
<dbReference type="GO" id="GO:0005737">
    <property type="term" value="C:cytoplasm"/>
    <property type="evidence" value="ECO:0007669"/>
    <property type="project" value="UniProtKB-SubCell"/>
</dbReference>
<dbReference type="GO" id="GO:0004139">
    <property type="term" value="F:deoxyribose-phosphate aldolase activity"/>
    <property type="evidence" value="ECO:0007669"/>
    <property type="project" value="UniProtKB-UniRule"/>
</dbReference>
<dbReference type="GO" id="GO:0006018">
    <property type="term" value="P:2-deoxyribose 1-phosphate catabolic process"/>
    <property type="evidence" value="ECO:0007669"/>
    <property type="project" value="UniProtKB-UniRule"/>
</dbReference>
<dbReference type="GO" id="GO:0016052">
    <property type="term" value="P:carbohydrate catabolic process"/>
    <property type="evidence" value="ECO:0007669"/>
    <property type="project" value="TreeGrafter"/>
</dbReference>
<dbReference type="GO" id="GO:0009264">
    <property type="term" value="P:deoxyribonucleotide catabolic process"/>
    <property type="evidence" value="ECO:0007669"/>
    <property type="project" value="InterPro"/>
</dbReference>
<dbReference type="CDD" id="cd00959">
    <property type="entry name" value="DeoC"/>
    <property type="match status" value="1"/>
</dbReference>
<dbReference type="FunFam" id="3.20.20.70:FF:000044">
    <property type="entry name" value="Deoxyribose-phosphate aldolase"/>
    <property type="match status" value="1"/>
</dbReference>
<dbReference type="Gene3D" id="3.20.20.70">
    <property type="entry name" value="Aldolase class I"/>
    <property type="match status" value="1"/>
</dbReference>
<dbReference type="HAMAP" id="MF_00114">
    <property type="entry name" value="DeoC_type1"/>
    <property type="match status" value="1"/>
</dbReference>
<dbReference type="InterPro" id="IPR013785">
    <property type="entry name" value="Aldolase_TIM"/>
</dbReference>
<dbReference type="InterPro" id="IPR011343">
    <property type="entry name" value="DeoC"/>
</dbReference>
<dbReference type="InterPro" id="IPR002915">
    <property type="entry name" value="DeoC/FbaB/LacD_aldolase"/>
</dbReference>
<dbReference type="InterPro" id="IPR028581">
    <property type="entry name" value="DeoC_typeI"/>
</dbReference>
<dbReference type="NCBIfam" id="TIGR00126">
    <property type="entry name" value="deoC"/>
    <property type="match status" value="1"/>
</dbReference>
<dbReference type="PANTHER" id="PTHR10889">
    <property type="entry name" value="DEOXYRIBOSE-PHOSPHATE ALDOLASE"/>
    <property type="match status" value="1"/>
</dbReference>
<dbReference type="PANTHER" id="PTHR10889:SF1">
    <property type="entry name" value="DEOXYRIBOSE-PHOSPHATE ALDOLASE"/>
    <property type="match status" value="1"/>
</dbReference>
<dbReference type="Pfam" id="PF01791">
    <property type="entry name" value="DeoC"/>
    <property type="match status" value="1"/>
</dbReference>
<dbReference type="PIRSF" id="PIRSF001357">
    <property type="entry name" value="DeoC"/>
    <property type="match status" value="1"/>
</dbReference>
<dbReference type="SMART" id="SM01133">
    <property type="entry name" value="DeoC"/>
    <property type="match status" value="1"/>
</dbReference>
<dbReference type="SUPFAM" id="SSF51569">
    <property type="entry name" value="Aldolase"/>
    <property type="match status" value="1"/>
</dbReference>
<comment type="function">
    <text evidence="1">Catalyzes a reversible aldol reaction between acetaldehyde and D-glyceraldehyde 3-phosphate to generate 2-deoxy-D-ribose 5-phosphate.</text>
</comment>
<comment type="catalytic activity">
    <reaction evidence="1">
        <text>2-deoxy-D-ribose 5-phosphate = D-glyceraldehyde 3-phosphate + acetaldehyde</text>
        <dbReference type="Rhea" id="RHEA:12821"/>
        <dbReference type="ChEBI" id="CHEBI:15343"/>
        <dbReference type="ChEBI" id="CHEBI:59776"/>
        <dbReference type="ChEBI" id="CHEBI:62877"/>
        <dbReference type="EC" id="4.1.2.4"/>
    </reaction>
</comment>
<comment type="pathway">
    <text evidence="1">Carbohydrate degradation; 2-deoxy-D-ribose 1-phosphate degradation; D-glyceraldehyde 3-phosphate and acetaldehyde from 2-deoxy-alpha-D-ribose 1-phosphate: step 2/2.</text>
</comment>
<comment type="subcellular location">
    <subcellularLocation>
        <location evidence="1">Cytoplasm</location>
    </subcellularLocation>
</comment>
<comment type="similarity">
    <text evidence="1 2">Belongs to the DeoC/FbaB aldolase family. DeoC type 1 subfamily.</text>
</comment>
<accession>P61108</accession>
<accession>Q99X77</accession>
<reference key="1">
    <citation type="journal article" date="2001" name="Lancet">
        <title>Whole genome sequencing of meticillin-resistant Staphylococcus aureus.</title>
        <authorList>
            <person name="Kuroda M."/>
            <person name="Ohta T."/>
            <person name="Uchiyama I."/>
            <person name="Baba T."/>
            <person name="Yuzawa H."/>
            <person name="Kobayashi I."/>
            <person name="Cui L."/>
            <person name="Oguchi A."/>
            <person name="Aoki K."/>
            <person name="Nagai Y."/>
            <person name="Lian J.-Q."/>
            <person name="Ito T."/>
            <person name="Kanamori M."/>
            <person name="Matsumaru H."/>
            <person name="Maruyama A."/>
            <person name="Murakami H."/>
            <person name="Hosoyama A."/>
            <person name="Mizutani-Ui Y."/>
            <person name="Takahashi N.K."/>
            <person name="Sawano T."/>
            <person name="Inoue R."/>
            <person name="Kaito C."/>
            <person name="Sekimizu K."/>
            <person name="Hirakawa H."/>
            <person name="Kuhara S."/>
            <person name="Goto S."/>
            <person name="Yabuzaki J."/>
            <person name="Kanehisa M."/>
            <person name="Yamashita A."/>
            <person name="Oshima K."/>
            <person name="Furuya K."/>
            <person name="Yoshino C."/>
            <person name="Shiba T."/>
            <person name="Hattori M."/>
            <person name="Ogasawara N."/>
            <person name="Hayashi H."/>
            <person name="Hiramatsu K."/>
        </authorList>
    </citation>
    <scope>NUCLEOTIDE SEQUENCE [LARGE SCALE GENOMIC DNA]</scope>
    <source>
        <strain>Mu50 / ATCC 700699</strain>
    </source>
</reference>